<reference key="1">
    <citation type="submission" date="2006-01" db="EMBL/GenBank/DDBJ databases">
        <title>Complete sequence of Novosphingobium aromaticivorans DSM 12444.</title>
        <authorList>
            <consortium name="US DOE Joint Genome Institute"/>
            <person name="Copeland A."/>
            <person name="Lucas S."/>
            <person name="Lapidus A."/>
            <person name="Barry K."/>
            <person name="Detter J.C."/>
            <person name="Glavina T."/>
            <person name="Hammon N."/>
            <person name="Israni S."/>
            <person name="Pitluck S."/>
            <person name="Chain P."/>
            <person name="Malfatti S."/>
            <person name="Shin M."/>
            <person name="Vergez L."/>
            <person name="Schmutz J."/>
            <person name="Larimer F."/>
            <person name="Land M."/>
            <person name="Kyrpides N."/>
            <person name="Ivanova N."/>
            <person name="Fredrickson J."/>
            <person name="Balkwill D."/>
            <person name="Romine M.F."/>
            <person name="Richardson P."/>
        </authorList>
    </citation>
    <scope>NUCLEOTIDE SEQUENCE [LARGE SCALE GENOMIC DNA]</scope>
    <source>
        <strain>ATCC 700278 / DSM 12444 / CCUG 56034 / CIP 105152 / NBRC 16084 / F199</strain>
    </source>
</reference>
<protein>
    <recommendedName>
        <fullName evidence="1">Large ribosomal subunit protein uL10</fullName>
    </recommendedName>
    <alternativeName>
        <fullName evidence="2">50S ribosomal protein L10</fullName>
    </alternativeName>
</protein>
<accession>Q2GCD2</accession>
<proteinExistence type="inferred from homology"/>
<sequence>MDRSQKAESVAFLNGVFAEAGAVVITRNLGMTVAQSTALRTKIREAGATYKVAKNSLAKLAVAGTDYEGLVDLFTGPTAIAASADPVAAAKAVVEFAKTTDKIEIVGGAMGSQVLNEAGVRALASMPSLDELRGTLIGLIQAPATKIAQLTTAPAAKLARVFGAYAKEAA</sequence>
<comment type="function">
    <text evidence="1">Forms part of the ribosomal stalk, playing a central role in the interaction of the ribosome with GTP-bound translation factors.</text>
</comment>
<comment type="subunit">
    <text evidence="1">Part of the ribosomal stalk of the 50S ribosomal subunit. The N-terminus interacts with L11 and the large rRNA to form the base of the stalk. The C-terminus forms an elongated spine to which L12 dimers bind in a sequential fashion forming a multimeric L10(L12)X complex.</text>
</comment>
<comment type="similarity">
    <text evidence="1">Belongs to the universal ribosomal protein uL10 family.</text>
</comment>
<keyword id="KW-1185">Reference proteome</keyword>
<keyword id="KW-0687">Ribonucleoprotein</keyword>
<keyword id="KW-0689">Ribosomal protein</keyword>
<keyword id="KW-0694">RNA-binding</keyword>
<keyword id="KW-0699">rRNA-binding</keyword>
<organism>
    <name type="scientific">Novosphingobium aromaticivorans (strain ATCC 700278 / DSM 12444 / CCUG 56034 / CIP 105152 / NBRC 16084 / F199)</name>
    <dbReference type="NCBI Taxonomy" id="279238"/>
    <lineage>
        <taxon>Bacteria</taxon>
        <taxon>Pseudomonadati</taxon>
        <taxon>Pseudomonadota</taxon>
        <taxon>Alphaproteobacteria</taxon>
        <taxon>Sphingomonadales</taxon>
        <taxon>Sphingomonadaceae</taxon>
        <taxon>Novosphingobium</taxon>
    </lineage>
</organism>
<evidence type="ECO:0000255" key="1">
    <source>
        <dbReference type="HAMAP-Rule" id="MF_00362"/>
    </source>
</evidence>
<evidence type="ECO:0000305" key="2"/>
<dbReference type="EMBL" id="CP000248">
    <property type="protein sequence ID" value="ABD24478.1"/>
    <property type="molecule type" value="Genomic_DNA"/>
</dbReference>
<dbReference type="RefSeq" id="WP_011443692.1">
    <property type="nucleotide sequence ID" value="NC_007794.1"/>
</dbReference>
<dbReference type="SMR" id="Q2GCD2"/>
<dbReference type="STRING" id="279238.Saro_0029"/>
<dbReference type="KEGG" id="nar:Saro_0029"/>
<dbReference type="eggNOG" id="COG0244">
    <property type="taxonomic scope" value="Bacteria"/>
</dbReference>
<dbReference type="HOGENOM" id="CLU_092227_0_0_5"/>
<dbReference type="Proteomes" id="UP000009134">
    <property type="component" value="Chromosome"/>
</dbReference>
<dbReference type="GO" id="GO:0015934">
    <property type="term" value="C:large ribosomal subunit"/>
    <property type="evidence" value="ECO:0007669"/>
    <property type="project" value="InterPro"/>
</dbReference>
<dbReference type="GO" id="GO:0070180">
    <property type="term" value="F:large ribosomal subunit rRNA binding"/>
    <property type="evidence" value="ECO:0007669"/>
    <property type="project" value="UniProtKB-UniRule"/>
</dbReference>
<dbReference type="GO" id="GO:0003735">
    <property type="term" value="F:structural constituent of ribosome"/>
    <property type="evidence" value="ECO:0007669"/>
    <property type="project" value="InterPro"/>
</dbReference>
<dbReference type="GO" id="GO:0006412">
    <property type="term" value="P:translation"/>
    <property type="evidence" value="ECO:0007669"/>
    <property type="project" value="UniProtKB-UniRule"/>
</dbReference>
<dbReference type="CDD" id="cd05797">
    <property type="entry name" value="Ribosomal_L10"/>
    <property type="match status" value="1"/>
</dbReference>
<dbReference type="Gene3D" id="3.30.70.1730">
    <property type="match status" value="1"/>
</dbReference>
<dbReference type="Gene3D" id="6.10.250.290">
    <property type="match status" value="1"/>
</dbReference>
<dbReference type="HAMAP" id="MF_00362">
    <property type="entry name" value="Ribosomal_uL10"/>
    <property type="match status" value="1"/>
</dbReference>
<dbReference type="InterPro" id="IPR001790">
    <property type="entry name" value="Ribosomal_uL10"/>
</dbReference>
<dbReference type="InterPro" id="IPR043141">
    <property type="entry name" value="Ribosomal_uL10-like_sf"/>
</dbReference>
<dbReference type="InterPro" id="IPR022973">
    <property type="entry name" value="Ribosomal_uL10_bac"/>
</dbReference>
<dbReference type="InterPro" id="IPR047865">
    <property type="entry name" value="Ribosomal_uL10_bac_type"/>
</dbReference>
<dbReference type="InterPro" id="IPR002363">
    <property type="entry name" value="Ribosomal_uL10_CS_bac"/>
</dbReference>
<dbReference type="NCBIfam" id="NF000955">
    <property type="entry name" value="PRK00099.1-1"/>
    <property type="match status" value="1"/>
</dbReference>
<dbReference type="PANTHER" id="PTHR11560">
    <property type="entry name" value="39S RIBOSOMAL PROTEIN L10, MITOCHONDRIAL"/>
    <property type="match status" value="1"/>
</dbReference>
<dbReference type="Pfam" id="PF00466">
    <property type="entry name" value="Ribosomal_L10"/>
    <property type="match status" value="1"/>
</dbReference>
<dbReference type="SUPFAM" id="SSF160369">
    <property type="entry name" value="Ribosomal protein L10-like"/>
    <property type="match status" value="1"/>
</dbReference>
<dbReference type="PROSITE" id="PS01109">
    <property type="entry name" value="RIBOSOMAL_L10"/>
    <property type="match status" value="1"/>
</dbReference>
<gene>
    <name evidence="1" type="primary">rplJ</name>
    <name type="ordered locus">Saro_0029</name>
</gene>
<feature type="chain" id="PRO_0000234866" description="Large ribosomal subunit protein uL10">
    <location>
        <begin position="1"/>
        <end position="170"/>
    </location>
</feature>
<name>RL10_NOVAD</name>